<gene>
    <name evidence="1" type="primary">gatB</name>
    <name type="ordered locus">BAMEG_0381</name>
</gene>
<protein>
    <recommendedName>
        <fullName evidence="1">Aspartyl/glutamyl-tRNA(Asn/Gln) amidotransferase subunit B</fullName>
        <shortName evidence="1">Asp/Glu-ADT subunit B</shortName>
        <ecNumber evidence="1">6.3.5.-</ecNumber>
    </recommendedName>
</protein>
<name>GATB_BACAC</name>
<accession>C3L560</accession>
<feature type="chain" id="PRO_1000122506" description="Aspartyl/glutamyl-tRNA(Asn/Gln) amidotransferase subunit B">
    <location>
        <begin position="1"/>
        <end position="475"/>
    </location>
</feature>
<comment type="function">
    <text evidence="1">Allows the formation of correctly charged Asn-tRNA(Asn) or Gln-tRNA(Gln) through the transamidation of misacylated Asp-tRNA(Asn) or Glu-tRNA(Gln) in organisms which lack either or both of asparaginyl-tRNA or glutaminyl-tRNA synthetases. The reaction takes place in the presence of glutamine and ATP through an activated phospho-Asp-tRNA(Asn) or phospho-Glu-tRNA(Gln).</text>
</comment>
<comment type="catalytic activity">
    <reaction evidence="1">
        <text>L-glutamyl-tRNA(Gln) + L-glutamine + ATP + H2O = L-glutaminyl-tRNA(Gln) + L-glutamate + ADP + phosphate + H(+)</text>
        <dbReference type="Rhea" id="RHEA:17521"/>
        <dbReference type="Rhea" id="RHEA-COMP:9681"/>
        <dbReference type="Rhea" id="RHEA-COMP:9684"/>
        <dbReference type="ChEBI" id="CHEBI:15377"/>
        <dbReference type="ChEBI" id="CHEBI:15378"/>
        <dbReference type="ChEBI" id="CHEBI:29985"/>
        <dbReference type="ChEBI" id="CHEBI:30616"/>
        <dbReference type="ChEBI" id="CHEBI:43474"/>
        <dbReference type="ChEBI" id="CHEBI:58359"/>
        <dbReference type="ChEBI" id="CHEBI:78520"/>
        <dbReference type="ChEBI" id="CHEBI:78521"/>
        <dbReference type="ChEBI" id="CHEBI:456216"/>
    </reaction>
</comment>
<comment type="catalytic activity">
    <reaction evidence="1">
        <text>L-aspartyl-tRNA(Asn) + L-glutamine + ATP + H2O = L-asparaginyl-tRNA(Asn) + L-glutamate + ADP + phosphate + 2 H(+)</text>
        <dbReference type="Rhea" id="RHEA:14513"/>
        <dbReference type="Rhea" id="RHEA-COMP:9674"/>
        <dbReference type="Rhea" id="RHEA-COMP:9677"/>
        <dbReference type="ChEBI" id="CHEBI:15377"/>
        <dbReference type="ChEBI" id="CHEBI:15378"/>
        <dbReference type="ChEBI" id="CHEBI:29985"/>
        <dbReference type="ChEBI" id="CHEBI:30616"/>
        <dbReference type="ChEBI" id="CHEBI:43474"/>
        <dbReference type="ChEBI" id="CHEBI:58359"/>
        <dbReference type="ChEBI" id="CHEBI:78515"/>
        <dbReference type="ChEBI" id="CHEBI:78516"/>
        <dbReference type="ChEBI" id="CHEBI:456216"/>
    </reaction>
</comment>
<comment type="subunit">
    <text evidence="1">Heterotrimer of A, B and C subunits.</text>
</comment>
<comment type="similarity">
    <text evidence="1">Belongs to the GatB/GatE family. GatB subfamily.</text>
</comment>
<organism>
    <name type="scientific">Bacillus anthracis (strain CDC 684 / NRRL 3495)</name>
    <dbReference type="NCBI Taxonomy" id="568206"/>
    <lineage>
        <taxon>Bacteria</taxon>
        <taxon>Bacillati</taxon>
        <taxon>Bacillota</taxon>
        <taxon>Bacilli</taxon>
        <taxon>Bacillales</taxon>
        <taxon>Bacillaceae</taxon>
        <taxon>Bacillus</taxon>
        <taxon>Bacillus cereus group</taxon>
    </lineage>
</organism>
<dbReference type="EC" id="6.3.5.-" evidence="1"/>
<dbReference type="EMBL" id="CP001215">
    <property type="protein sequence ID" value="ACP16524.1"/>
    <property type="molecule type" value="Genomic_DNA"/>
</dbReference>
<dbReference type="RefSeq" id="WP_001047678.1">
    <property type="nucleotide sequence ID" value="NC_012581.1"/>
</dbReference>
<dbReference type="SMR" id="C3L560"/>
<dbReference type="GeneID" id="45020378"/>
<dbReference type="KEGG" id="bah:BAMEG_0381"/>
<dbReference type="HOGENOM" id="CLU_019240_0_0_9"/>
<dbReference type="GO" id="GO:0050566">
    <property type="term" value="F:asparaginyl-tRNA synthase (glutamine-hydrolyzing) activity"/>
    <property type="evidence" value="ECO:0007669"/>
    <property type="project" value="RHEA"/>
</dbReference>
<dbReference type="GO" id="GO:0005524">
    <property type="term" value="F:ATP binding"/>
    <property type="evidence" value="ECO:0007669"/>
    <property type="project" value="UniProtKB-KW"/>
</dbReference>
<dbReference type="GO" id="GO:0050567">
    <property type="term" value="F:glutaminyl-tRNA synthase (glutamine-hydrolyzing) activity"/>
    <property type="evidence" value="ECO:0007669"/>
    <property type="project" value="UniProtKB-UniRule"/>
</dbReference>
<dbReference type="GO" id="GO:0070681">
    <property type="term" value="P:glutaminyl-tRNAGln biosynthesis via transamidation"/>
    <property type="evidence" value="ECO:0007669"/>
    <property type="project" value="TreeGrafter"/>
</dbReference>
<dbReference type="GO" id="GO:0006412">
    <property type="term" value="P:translation"/>
    <property type="evidence" value="ECO:0007669"/>
    <property type="project" value="UniProtKB-UniRule"/>
</dbReference>
<dbReference type="FunFam" id="1.10.10.410:FF:000001">
    <property type="entry name" value="Aspartyl/glutamyl-tRNA(Asn/Gln) amidotransferase subunit B"/>
    <property type="match status" value="1"/>
</dbReference>
<dbReference type="FunFam" id="1.10.150.380:FF:000001">
    <property type="entry name" value="Aspartyl/glutamyl-tRNA(Asn/Gln) amidotransferase subunit B"/>
    <property type="match status" value="1"/>
</dbReference>
<dbReference type="Gene3D" id="1.10.10.410">
    <property type="match status" value="1"/>
</dbReference>
<dbReference type="Gene3D" id="1.10.150.380">
    <property type="entry name" value="GatB domain, N-terminal subdomain"/>
    <property type="match status" value="1"/>
</dbReference>
<dbReference type="HAMAP" id="MF_00121">
    <property type="entry name" value="GatB"/>
    <property type="match status" value="1"/>
</dbReference>
<dbReference type="InterPro" id="IPR017959">
    <property type="entry name" value="Asn/Gln-tRNA_amidoTrfase_suB/E"/>
</dbReference>
<dbReference type="InterPro" id="IPR006075">
    <property type="entry name" value="Asn/Gln-tRNA_Trfase_suB/E_cat"/>
</dbReference>
<dbReference type="InterPro" id="IPR018027">
    <property type="entry name" value="Asn/Gln_amidotransferase"/>
</dbReference>
<dbReference type="InterPro" id="IPR003789">
    <property type="entry name" value="Asn/Gln_tRNA_amidoTrase-B-like"/>
</dbReference>
<dbReference type="InterPro" id="IPR004413">
    <property type="entry name" value="GatB"/>
</dbReference>
<dbReference type="InterPro" id="IPR042114">
    <property type="entry name" value="GatB_C_1"/>
</dbReference>
<dbReference type="InterPro" id="IPR023168">
    <property type="entry name" value="GatB_Yqey_C_2"/>
</dbReference>
<dbReference type="InterPro" id="IPR017958">
    <property type="entry name" value="Gln-tRNA_amidoTrfase_suB_CS"/>
</dbReference>
<dbReference type="InterPro" id="IPR014746">
    <property type="entry name" value="Gln_synth/guanido_kin_cat_dom"/>
</dbReference>
<dbReference type="NCBIfam" id="TIGR00133">
    <property type="entry name" value="gatB"/>
    <property type="match status" value="1"/>
</dbReference>
<dbReference type="NCBIfam" id="NF004011">
    <property type="entry name" value="PRK05477.1-1"/>
    <property type="match status" value="1"/>
</dbReference>
<dbReference type="NCBIfam" id="NF004012">
    <property type="entry name" value="PRK05477.1-2"/>
    <property type="match status" value="1"/>
</dbReference>
<dbReference type="NCBIfam" id="NF004014">
    <property type="entry name" value="PRK05477.1-4"/>
    <property type="match status" value="1"/>
</dbReference>
<dbReference type="PANTHER" id="PTHR11659">
    <property type="entry name" value="GLUTAMYL-TRNA GLN AMIDOTRANSFERASE SUBUNIT B MITOCHONDRIAL AND PROKARYOTIC PET112-RELATED"/>
    <property type="match status" value="1"/>
</dbReference>
<dbReference type="PANTHER" id="PTHR11659:SF0">
    <property type="entry name" value="GLUTAMYL-TRNA(GLN) AMIDOTRANSFERASE SUBUNIT B, MITOCHONDRIAL"/>
    <property type="match status" value="1"/>
</dbReference>
<dbReference type="Pfam" id="PF02934">
    <property type="entry name" value="GatB_N"/>
    <property type="match status" value="1"/>
</dbReference>
<dbReference type="Pfam" id="PF02637">
    <property type="entry name" value="GatB_Yqey"/>
    <property type="match status" value="1"/>
</dbReference>
<dbReference type="SMART" id="SM00845">
    <property type="entry name" value="GatB_Yqey"/>
    <property type="match status" value="1"/>
</dbReference>
<dbReference type="SUPFAM" id="SSF89095">
    <property type="entry name" value="GatB/YqeY motif"/>
    <property type="match status" value="1"/>
</dbReference>
<dbReference type="SUPFAM" id="SSF55931">
    <property type="entry name" value="Glutamine synthetase/guanido kinase"/>
    <property type="match status" value="1"/>
</dbReference>
<dbReference type="PROSITE" id="PS01234">
    <property type="entry name" value="GATB"/>
    <property type="match status" value="1"/>
</dbReference>
<sequence length="475" mass="53222">MNLETIIGLEVHVELKTNSKIFSASPTEFGAEPNTQTSVIDLGYPGVLPTLNKEAVNFAMKAAMALNCEIATETKFDRKNYFYPDNPKAYQISQFDKPIGENGWIEIEVDGKKKRIGITRLHLEEDAGKSTHTADGSLVDYNRQGMPLIEIVSEPDMRTPEEAYAYLEKLKSIIQYTGVSDCKMEEGSLRCDANISLRPVGQEKFGTKAELKNLNSFTYVQKGLEHEQVRQEKELLSGGIIQQETRRYDEATKKTILMRVKEGSDDYRYFPEPDLVELYIDDAWKEEVRASIPELPDARKARYVAEIGLPAYDAHVLTLTKEMSDFFEAAIADGADAKLTSNWLMGEVLAYLNKQQKELKDVALTPAGLSKMVQLIEKGTISSKIAKKVFNELIEKGGDPEEIVKAKGLVQISDEGTLRKVVTEILDNNEQSIEDFKNGKDRAIGFLVGQIMKATKGQANPPLVNKILLEEINKR</sequence>
<reference key="1">
    <citation type="submission" date="2008-10" db="EMBL/GenBank/DDBJ databases">
        <title>Genome sequence of Bacillus anthracis str. CDC 684.</title>
        <authorList>
            <person name="Dodson R.J."/>
            <person name="Munk A.C."/>
            <person name="Brettin T."/>
            <person name="Bruce D."/>
            <person name="Detter C."/>
            <person name="Tapia R."/>
            <person name="Han C."/>
            <person name="Sutton G."/>
            <person name="Sims D."/>
        </authorList>
    </citation>
    <scope>NUCLEOTIDE SEQUENCE [LARGE SCALE GENOMIC DNA]</scope>
    <source>
        <strain>CDC 684 / NRRL 3495</strain>
    </source>
</reference>
<proteinExistence type="inferred from homology"/>
<keyword id="KW-0067">ATP-binding</keyword>
<keyword id="KW-0436">Ligase</keyword>
<keyword id="KW-0547">Nucleotide-binding</keyword>
<keyword id="KW-0648">Protein biosynthesis</keyword>
<evidence type="ECO:0000255" key="1">
    <source>
        <dbReference type="HAMAP-Rule" id="MF_00121"/>
    </source>
</evidence>